<proteinExistence type="evidence at protein level"/>
<protein>
    <recommendedName>
        <fullName>N-terminal acetyltransferase A complex catalytic subunit ard1</fullName>
        <shortName>NatA complex subunit ARD1</shortName>
        <ecNumber evidence="1">2.3.1.255</ecNumber>
    </recommendedName>
</protein>
<name>ARD1_SCHPO</name>
<comment type="function">
    <text evidence="1">Catalytic component of the NatA N-terminal acetyltransferase, which catalyzes acetylation of proteins beginning with Met-Ser, Met-Gly and Met-Ala. N-acetylation plays a role in normal eukaryotic translation and processing, protect against proteolytic degradation and protein turnover.</text>
</comment>
<comment type="catalytic activity">
    <reaction evidence="1">
        <text>N-terminal glycyl-[protein] + acetyl-CoA = N-terminal N(alpha)-acetylglycyl-[protein] + CoA + H(+)</text>
        <dbReference type="Rhea" id="RHEA:50496"/>
        <dbReference type="Rhea" id="RHEA-COMP:12666"/>
        <dbReference type="Rhea" id="RHEA-COMP:12700"/>
        <dbReference type="ChEBI" id="CHEBI:15378"/>
        <dbReference type="ChEBI" id="CHEBI:57287"/>
        <dbReference type="ChEBI" id="CHEBI:57288"/>
        <dbReference type="ChEBI" id="CHEBI:64723"/>
        <dbReference type="ChEBI" id="CHEBI:133369"/>
        <dbReference type="EC" id="2.3.1.255"/>
    </reaction>
</comment>
<comment type="catalytic activity">
    <reaction evidence="1">
        <text>N-terminal L-alanyl-[protein] + acetyl-CoA = N-terminal N(alpha)-acetyl-L-alanyl-[protein] + CoA + H(+)</text>
        <dbReference type="Rhea" id="RHEA:50500"/>
        <dbReference type="Rhea" id="RHEA-COMP:12701"/>
        <dbReference type="Rhea" id="RHEA-COMP:12702"/>
        <dbReference type="ChEBI" id="CHEBI:15378"/>
        <dbReference type="ChEBI" id="CHEBI:57287"/>
        <dbReference type="ChEBI" id="CHEBI:57288"/>
        <dbReference type="ChEBI" id="CHEBI:64718"/>
        <dbReference type="ChEBI" id="CHEBI:83683"/>
        <dbReference type="EC" id="2.3.1.255"/>
    </reaction>
</comment>
<comment type="catalytic activity">
    <reaction evidence="1">
        <text>N-terminal L-seryl-[protein] + acetyl-CoA = N-terminal N(alpha)-acetyl-L-seryl-[protein] + CoA + H(+)</text>
        <dbReference type="Rhea" id="RHEA:50504"/>
        <dbReference type="Rhea" id="RHEA-COMP:12703"/>
        <dbReference type="Rhea" id="RHEA-COMP:12704"/>
        <dbReference type="ChEBI" id="CHEBI:15378"/>
        <dbReference type="ChEBI" id="CHEBI:57287"/>
        <dbReference type="ChEBI" id="CHEBI:57288"/>
        <dbReference type="ChEBI" id="CHEBI:64738"/>
        <dbReference type="ChEBI" id="CHEBI:83690"/>
        <dbReference type="EC" id="2.3.1.255"/>
    </reaction>
</comment>
<comment type="catalytic activity">
    <reaction evidence="1">
        <text>N-terminal L-valyl-[protein] + acetyl-CoA = N-terminal N(alpha)-acetyl-L-valyl-[protein] + CoA + H(+)</text>
        <dbReference type="Rhea" id="RHEA:50508"/>
        <dbReference type="Rhea" id="RHEA-COMP:12705"/>
        <dbReference type="Rhea" id="RHEA-COMP:12706"/>
        <dbReference type="ChEBI" id="CHEBI:15378"/>
        <dbReference type="ChEBI" id="CHEBI:57287"/>
        <dbReference type="ChEBI" id="CHEBI:57288"/>
        <dbReference type="ChEBI" id="CHEBI:64741"/>
        <dbReference type="ChEBI" id="CHEBI:133371"/>
        <dbReference type="EC" id="2.3.1.255"/>
    </reaction>
</comment>
<comment type="catalytic activity">
    <reaction evidence="1">
        <text>N-terminal L-cysteinyl-[protein] + acetyl-CoA = N-terminal N(alpha)-acetyl-L-cysteinyl-[protein] + CoA + H(+)</text>
        <dbReference type="Rhea" id="RHEA:50512"/>
        <dbReference type="Rhea" id="RHEA-COMP:12707"/>
        <dbReference type="Rhea" id="RHEA-COMP:12708"/>
        <dbReference type="ChEBI" id="CHEBI:15378"/>
        <dbReference type="ChEBI" id="CHEBI:57287"/>
        <dbReference type="ChEBI" id="CHEBI:57288"/>
        <dbReference type="ChEBI" id="CHEBI:65250"/>
        <dbReference type="ChEBI" id="CHEBI:133372"/>
        <dbReference type="EC" id="2.3.1.255"/>
    </reaction>
</comment>
<comment type="catalytic activity">
    <reaction evidence="1">
        <text>N-terminal L-threonyl-[protein] + acetyl-CoA = N-terminal N(alpha)-acetyl-L-threonyl-[protein] + CoA + H(+)</text>
        <dbReference type="Rhea" id="RHEA:50516"/>
        <dbReference type="Rhea" id="RHEA-COMP:12709"/>
        <dbReference type="Rhea" id="RHEA-COMP:12710"/>
        <dbReference type="ChEBI" id="CHEBI:15378"/>
        <dbReference type="ChEBI" id="CHEBI:57287"/>
        <dbReference type="ChEBI" id="CHEBI:57288"/>
        <dbReference type="ChEBI" id="CHEBI:64739"/>
        <dbReference type="ChEBI" id="CHEBI:133375"/>
        <dbReference type="EC" id="2.3.1.255"/>
    </reaction>
</comment>
<comment type="subunit">
    <text evidence="1">Component of the N-terminal acetyltransferase A (NatA) complex, which is composed of at least ard1 and nat1.</text>
</comment>
<comment type="interaction">
    <interactant intactId="EBI-16067117">
        <id>Q9UTI3</id>
    </interactant>
    <interactant intactId="EBI-16067095">
        <id>O74985</id>
        <label>nat1</label>
    </interactant>
    <organismsDiffer>false</organismsDiffer>
    <experiments>4</experiments>
</comment>
<comment type="subcellular location">
    <subcellularLocation>
        <location evidence="3">Cytoplasm</location>
    </subcellularLocation>
    <subcellularLocation>
        <location evidence="3">Nucleus</location>
    </subcellularLocation>
</comment>
<comment type="similarity">
    <text evidence="4">Belongs to the acetyltransferase family. ARD1 subfamily.</text>
</comment>
<dbReference type="EC" id="2.3.1.255" evidence="1"/>
<dbReference type="EMBL" id="CU329670">
    <property type="protein sequence ID" value="CAB52427.1"/>
    <property type="molecule type" value="Genomic_DNA"/>
</dbReference>
<dbReference type="PIR" id="T37723">
    <property type="entry name" value="T37723"/>
</dbReference>
<dbReference type="RefSeq" id="NP_594309.1">
    <property type="nucleotide sequence ID" value="NM_001019732.2"/>
</dbReference>
<dbReference type="PDB" id="4KVM">
    <property type="method" value="X-ray"/>
    <property type="resolution" value="2.60 A"/>
    <property type="chains" value="E/F/G/H=1-156"/>
</dbReference>
<dbReference type="PDB" id="4KVO">
    <property type="method" value="X-ray"/>
    <property type="resolution" value="3.15 A"/>
    <property type="chains" value="E/F/G/H=1-156"/>
</dbReference>
<dbReference type="PDB" id="4KVX">
    <property type="method" value="X-ray"/>
    <property type="resolution" value="2.00 A"/>
    <property type="chains" value="A/B=1-156"/>
</dbReference>
<dbReference type="PDBsum" id="4KVM"/>
<dbReference type="PDBsum" id="4KVO"/>
<dbReference type="PDBsum" id="4KVX"/>
<dbReference type="SMR" id="Q9UTI3"/>
<dbReference type="BioGRID" id="279215">
    <property type="interactions" value="3"/>
</dbReference>
<dbReference type="DIP" id="DIP-60549N"/>
<dbReference type="FunCoup" id="Q9UTI3">
    <property type="interactions" value="327"/>
</dbReference>
<dbReference type="IntAct" id="Q9UTI3">
    <property type="interactions" value="1"/>
</dbReference>
<dbReference type="STRING" id="284812.Q9UTI3"/>
<dbReference type="iPTMnet" id="Q9UTI3"/>
<dbReference type="PaxDb" id="4896-SPAC15E1.08.1"/>
<dbReference type="EnsemblFungi" id="SPAC15E1.08.1">
    <property type="protein sequence ID" value="SPAC15E1.08.1:pep"/>
    <property type="gene ID" value="SPAC15E1.08"/>
</dbReference>
<dbReference type="GeneID" id="2542765"/>
<dbReference type="KEGG" id="spo:2542765"/>
<dbReference type="PomBase" id="SPAC15E1.08"/>
<dbReference type="VEuPathDB" id="FungiDB:SPAC15E1.08"/>
<dbReference type="eggNOG" id="KOG3235">
    <property type="taxonomic scope" value="Eukaryota"/>
</dbReference>
<dbReference type="HOGENOM" id="CLU_013985_7_2_1"/>
<dbReference type="InParanoid" id="Q9UTI3"/>
<dbReference type="OMA" id="MSMQNAN"/>
<dbReference type="PhylomeDB" id="Q9UTI3"/>
<dbReference type="BRENDA" id="2.3.1.255">
    <property type="organism ID" value="5613"/>
</dbReference>
<dbReference type="EvolutionaryTrace" id="Q9UTI3"/>
<dbReference type="PRO" id="PR:Q9UTI3"/>
<dbReference type="Proteomes" id="UP000002485">
    <property type="component" value="Chromosome I"/>
</dbReference>
<dbReference type="GO" id="GO:0005829">
    <property type="term" value="C:cytosol"/>
    <property type="evidence" value="ECO:0007005"/>
    <property type="project" value="PomBase"/>
</dbReference>
<dbReference type="GO" id="GO:0031415">
    <property type="term" value="C:NatA complex"/>
    <property type="evidence" value="ECO:0000314"/>
    <property type="project" value="PomBase"/>
</dbReference>
<dbReference type="GO" id="GO:0005634">
    <property type="term" value="C:nucleus"/>
    <property type="evidence" value="ECO:0007005"/>
    <property type="project" value="PomBase"/>
</dbReference>
<dbReference type="GO" id="GO:1990189">
    <property type="term" value="F:protein N-terminal-serine acetyltransferase activity"/>
    <property type="evidence" value="ECO:0000314"/>
    <property type="project" value="PomBase"/>
</dbReference>
<dbReference type="GO" id="GO:0008999">
    <property type="term" value="F:protein-N-terminal-alanine acetyltransferase activity"/>
    <property type="evidence" value="ECO:0007669"/>
    <property type="project" value="RHEA"/>
</dbReference>
<dbReference type="GO" id="GO:1990190">
    <property type="term" value="F:protein-N-terminal-glutamate acetyltransferase activity"/>
    <property type="evidence" value="ECO:0000314"/>
    <property type="project" value="PomBase"/>
</dbReference>
<dbReference type="GO" id="GO:0051604">
    <property type="term" value="P:protein maturation"/>
    <property type="evidence" value="ECO:0000305"/>
    <property type="project" value="PomBase"/>
</dbReference>
<dbReference type="CDD" id="cd04301">
    <property type="entry name" value="NAT_SF"/>
    <property type="match status" value="1"/>
</dbReference>
<dbReference type="FunFam" id="3.40.630.30:FF:000098">
    <property type="entry name" value="N-terminal acetyltransferase A complex catalytic subunit Ard1"/>
    <property type="match status" value="1"/>
</dbReference>
<dbReference type="Gene3D" id="3.40.630.30">
    <property type="match status" value="1"/>
</dbReference>
<dbReference type="InterPro" id="IPR016181">
    <property type="entry name" value="Acyl_CoA_acyltransferase"/>
</dbReference>
<dbReference type="InterPro" id="IPR045047">
    <property type="entry name" value="Ard1-like"/>
</dbReference>
<dbReference type="InterPro" id="IPR000182">
    <property type="entry name" value="GNAT_dom"/>
</dbReference>
<dbReference type="PANTHER" id="PTHR23091">
    <property type="entry name" value="N-TERMINAL ACETYLTRANSFERASE"/>
    <property type="match status" value="1"/>
</dbReference>
<dbReference type="PANTHER" id="PTHR23091:SF4">
    <property type="entry name" value="N-TERMINAL AMINO-ACID N(ALPHA)-ACETYLTRANSFERASE NATA"/>
    <property type="match status" value="1"/>
</dbReference>
<dbReference type="Pfam" id="PF00583">
    <property type="entry name" value="Acetyltransf_1"/>
    <property type="match status" value="1"/>
</dbReference>
<dbReference type="SUPFAM" id="SSF55729">
    <property type="entry name" value="Acyl-CoA N-acyltransferases (Nat)"/>
    <property type="match status" value="1"/>
</dbReference>
<dbReference type="PROSITE" id="PS51186">
    <property type="entry name" value="GNAT"/>
    <property type="match status" value="1"/>
</dbReference>
<organism>
    <name type="scientific">Schizosaccharomyces pombe (strain 972 / ATCC 24843)</name>
    <name type="common">Fission yeast</name>
    <dbReference type="NCBI Taxonomy" id="284812"/>
    <lineage>
        <taxon>Eukaryota</taxon>
        <taxon>Fungi</taxon>
        <taxon>Dikarya</taxon>
        <taxon>Ascomycota</taxon>
        <taxon>Taphrinomycotina</taxon>
        <taxon>Schizosaccharomycetes</taxon>
        <taxon>Schizosaccharomycetales</taxon>
        <taxon>Schizosaccharomycetaceae</taxon>
        <taxon>Schizosaccharomyces</taxon>
    </lineage>
</organism>
<feature type="chain" id="PRO_0000310300" description="N-terminal acetyltransferase A complex catalytic subunit ard1">
    <location>
        <begin position="1"/>
        <end position="177"/>
    </location>
</feature>
<feature type="domain" description="N-acetyltransferase" evidence="2">
    <location>
        <begin position="1"/>
        <end position="153"/>
    </location>
</feature>
<feature type="strand" evidence="6">
    <location>
        <begin position="3"/>
        <end position="5"/>
    </location>
</feature>
<feature type="helix" evidence="6">
    <location>
        <begin position="8"/>
        <end position="10"/>
    </location>
</feature>
<feature type="helix" evidence="6">
    <location>
        <begin position="11"/>
        <end position="16"/>
    </location>
</feature>
<feature type="turn" evidence="6">
    <location>
        <begin position="17"/>
        <end position="20"/>
    </location>
</feature>
<feature type="helix" evidence="6">
    <location>
        <begin position="22"/>
        <end position="25"/>
    </location>
</feature>
<feature type="helix" evidence="6">
    <location>
        <begin position="28"/>
        <end position="36"/>
    </location>
</feature>
<feature type="strand" evidence="6">
    <location>
        <begin position="43"/>
        <end position="46"/>
    </location>
</feature>
<feature type="strand" evidence="6">
    <location>
        <begin position="52"/>
        <end position="60"/>
    </location>
</feature>
<feature type="helix" evidence="6">
    <location>
        <begin position="65"/>
        <end position="67"/>
    </location>
</feature>
<feature type="strand" evidence="6">
    <location>
        <begin position="71"/>
        <end position="78"/>
    </location>
</feature>
<feature type="helix" evidence="6">
    <location>
        <begin position="80"/>
        <end position="82"/>
    </location>
</feature>
<feature type="strand" evidence="5">
    <location>
        <begin position="84"/>
        <end position="86"/>
    </location>
</feature>
<feature type="helix" evidence="6">
    <location>
        <begin position="87"/>
        <end position="103"/>
    </location>
</feature>
<feature type="strand" evidence="6">
    <location>
        <begin position="106"/>
        <end position="113"/>
    </location>
</feature>
<feature type="helix" evidence="6">
    <location>
        <begin position="117"/>
        <end position="124"/>
    </location>
</feature>
<feature type="strand" evidence="6">
    <location>
        <begin position="130"/>
        <end position="135"/>
    </location>
</feature>
<feature type="strand" evidence="6">
    <location>
        <begin position="145"/>
        <end position="151"/>
    </location>
</feature>
<evidence type="ECO:0000250" key="1">
    <source>
        <dbReference type="UniProtKB" id="P07347"/>
    </source>
</evidence>
<evidence type="ECO:0000255" key="2">
    <source>
        <dbReference type="PROSITE-ProRule" id="PRU00532"/>
    </source>
</evidence>
<evidence type="ECO:0000269" key="3">
    <source>
    </source>
</evidence>
<evidence type="ECO:0000305" key="4"/>
<evidence type="ECO:0007829" key="5">
    <source>
        <dbReference type="PDB" id="4KVM"/>
    </source>
</evidence>
<evidence type="ECO:0007829" key="6">
    <source>
        <dbReference type="PDB" id="4KVX"/>
    </source>
</evidence>
<accession>Q9UTI3</accession>
<keyword id="KW-0002">3D-structure</keyword>
<keyword id="KW-0012">Acyltransferase</keyword>
<keyword id="KW-0963">Cytoplasm</keyword>
<keyword id="KW-0539">Nucleus</keyword>
<keyword id="KW-1185">Reference proteome</keyword>
<keyword id="KW-0808">Transferase</keyword>
<reference key="1">
    <citation type="journal article" date="2002" name="Nature">
        <title>The genome sequence of Schizosaccharomyces pombe.</title>
        <authorList>
            <person name="Wood V."/>
            <person name="Gwilliam R."/>
            <person name="Rajandream M.A."/>
            <person name="Lyne M.H."/>
            <person name="Lyne R."/>
            <person name="Stewart A."/>
            <person name="Sgouros J.G."/>
            <person name="Peat N."/>
            <person name="Hayles J."/>
            <person name="Baker S.G."/>
            <person name="Basham D."/>
            <person name="Bowman S."/>
            <person name="Brooks K."/>
            <person name="Brown D."/>
            <person name="Brown S."/>
            <person name="Chillingworth T."/>
            <person name="Churcher C.M."/>
            <person name="Collins M."/>
            <person name="Connor R."/>
            <person name="Cronin A."/>
            <person name="Davis P."/>
            <person name="Feltwell T."/>
            <person name="Fraser A."/>
            <person name="Gentles S."/>
            <person name="Goble A."/>
            <person name="Hamlin N."/>
            <person name="Harris D.E."/>
            <person name="Hidalgo J."/>
            <person name="Hodgson G."/>
            <person name="Holroyd S."/>
            <person name="Hornsby T."/>
            <person name="Howarth S."/>
            <person name="Huckle E.J."/>
            <person name="Hunt S."/>
            <person name="Jagels K."/>
            <person name="James K.D."/>
            <person name="Jones L."/>
            <person name="Jones M."/>
            <person name="Leather S."/>
            <person name="McDonald S."/>
            <person name="McLean J."/>
            <person name="Mooney P."/>
            <person name="Moule S."/>
            <person name="Mungall K.L."/>
            <person name="Murphy L.D."/>
            <person name="Niblett D."/>
            <person name="Odell C."/>
            <person name="Oliver K."/>
            <person name="O'Neil S."/>
            <person name="Pearson D."/>
            <person name="Quail M.A."/>
            <person name="Rabbinowitsch E."/>
            <person name="Rutherford K.M."/>
            <person name="Rutter S."/>
            <person name="Saunders D."/>
            <person name="Seeger K."/>
            <person name="Sharp S."/>
            <person name="Skelton J."/>
            <person name="Simmonds M.N."/>
            <person name="Squares R."/>
            <person name="Squares S."/>
            <person name="Stevens K."/>
            <person name="Taylor K."/>
            <person name="Taylor R.G."/>
            <person name="Tivey A."/>
            <person name="Walsh S.V."/>
            <person name="Warren T."/>
            <person name="Whitehead S."/>
            <person name="Woodward J.R."/>
            <person name="Volckaert G."/>
            <person name="Aert R."/>
            <person name="Robben J."/>
            <person name="Grymonprez B."/>
            <person name="Weltjens I."/>
            <person name="Vanstreels E."/>
            <person name="Rieger M."/>
            <person name="Schaefer M."/>
            <person name="Mueller-Auer S."/>
            <person name="Gabel C."/>
            <person name="Fuchs M."/>
            <person name="Duesterhoeft A."/>
            <person name="Fritzc C."/>
            <person name="Holzer E."/>
            <person name="Moestl D."/>
            <person name="Hilbert H."/>
            <person name="Borzym K."/>
            <person name="Langer I."/>
            <person name="Beck A."/>
            <person name="Lehrach H."/>
            <person name="Reinhardt R."/>
            <person name="Pohl T.M."/>
            <person name="Eger P."/>
            <person name="Zimmermann W."/>
            <person name="Wedler H."/>
            <person name="Wambutt R."/>
            <person name="Purnelle B."/>
            <person name="Goffeau A."/>
            <person name="Cadieu E."/>
            <person name="Dreano S."/>
            <person name="Gloux S."/>
            <person name="Lelaure V."/>
            <person name="Mottier S."/>
            <person name="Galibert F."/>
            <person name="Aves S.J."/>
            <person name="Xiang Z."/>
            <person name="Hunt C."/>
            <person name="Moore K."/>
            <person name="Hurst S.M."/>
            <person name="Lucas M."/>
            <person name="Rochet M."/>
            <person name="Gaillardin C."/>
            <person name="Tallada V.A."/>
            <person name="Garzon A."/>
            <person name="Thode G."/>
            <person name="Daga R.R."/>
            <person name="Cruzado L."/>
            <person name="Jimenez J."/>
            <person name="Sanchez M."/>
            <person name="del Rey F."/>
            <person name="Benito J."/>
            <person name="Dominguez A."/>
            <person name="Revuelta J.L."/>
            <person name="Moreno S."/>
            <person name="Armstrong J."/>
            <person name="Forsburg S.L."/>
            <person name="Cerutti L."/>
            <person name="Lowe T."/>
            <person name="McCombie W.R."/>
            <person name="Paulsen I."/>
            <person name="Potashkin J."/>
            <person name="Shpakovski G.V."/>
            <person name="Ussery D."/>
            <person name="Barrell B.G."/>
            <person name="Nurse P."/>
        </authorList>
    </citation>
    <scope>NUCLEOTIDE SEQUENCE [LARGE SCALE GENOMIC DNA]</scope>
    <source>
        <strain>972 / ATCC 24843</strain>
    </source>
</reference>
<reference key="2">
    <citation type="journal article" date="2006" name="Nat. Biotechnol.">
        <title>ORFeome cloning and global analysis of protein localization in the fission yeast Schizosaccharomyces pombe.</title>
        <authorList>
            <person name="Matsuyama A."/>
            <person name="Arai R."/>
            <person name="Yashiroda Y."/>
            <person name="Shirai A."/>
            <person name="Kamata A."/>
            <person name="Sekido S."/>
            <person name="Kobayashi Y."/>
            <person name="Hashimoto A."/>
            <person name="Hamamoto M."/>
            <person name="Hiraoka Y."/>
            <person name="Horinouchi S."/>
            <person name="Yoshida M."/>
        </authorList>
    </citation>
    <scope>SUBCELLULAR LOCATION [LARGE SCALE ANALYSIS]</scope>
</reference>
<sequence>MDIRPARISDLTGMQNCNLHNLPENYQLKYYLYHAISWPMLSYVATDPKGRVVGYVLAKMEEEPKDGIPHGHITSVSVMRSYRHLGLAKRLMVQSQRAMVEVYGAKYMSLHVRKSNRAAIHLYRDTLQFDVQGIESKYYADGEDAYAMHKDFSTLKFDTPETNDELAKTVQSLALNN</sequence>
<gene>
    <name type="primary">ard1</name>
    <name type="ORF">SPAC15E1.08</name>
</gene>